<name>MYB1_PLAF7</name>
<organism>
    <name type="scientific">Plasmodium falciparum (isolate 3D7)</name>
    <dbReference type="NCBI Taxonomy" id="36329"/>
    <lineage>
        <taxon>Eukaryota</taxon>
        <taxon>Sar</taxon>
        <taxon>Alveolata</taxon>
        <taxon>Apicomplexa</taxon>
        <taxon>Aconoidasida</taxon>
        <taxon>Haemosporida</taxon>
        <taxon>Plasmodiidae</taxon>
        <taxon>Plasmodium</taxon>
        <taxon>Plasmodium (Laverania)</taxon>
    </lineage>
</organism>
<reference key="1">
    <citation type="journal article" date="2002" name="Nature">
        <title>Genome sequence of the human malaria parasite Plasmodium falciparum.</title>
        <authorList>
            <person name="Gardner M.J."/>
            <person name="Hall N."/>
            <person name="Fung E."/>
            <person name="White O."/>
            <person name="Berriman M."/>
            <person name="Hyman R.W."/>
            <person name="Carlton J.M."/>
            <person name="Pain A."/>
            <person name="Nelson K.E."/>
            <person name="Bowman S."/>
            <person name="Paulsen I.T."/>
            <person name="James K.D."/>
            <person name="Eisen J.A."/>
            <person name="Rutherford K.M."/>
            <person name="Salzberg S.L."/>
            <person name="Craig A."/>
            <person name="Kyes S."/>
            <person name="Chan M.-S."/>
            <person name="Nene V."/>
            <person name="Shallom S.J."/>
            <person name="Suh B."/>
            <person name="Peterson J."/>
            <person name="Angiuoli S."/>
            <person name="Pertea M."/>
            <person name="Allen J."/>
            <person name="Selengut J."/>
            <person name="Haft D."/>
            <person name="Mather M.W."/>
            <person name="Vaidya A.B."/>
            <person name="Martin D.M.A."/>
            <person name="Fairlamb A.H."/>
            <person name="Fraunholz M.J."/>
            <person name="Roos D.S."/>
            <person name="Ralph S.A."/>
            <person name="McFadden G.I."/>
            <person name="Cummings L.M."/>
            <person name="Subramanian G.M."/>
            <person name="Mungall C."/>
            <person name="Venter J.C."/>
            <person name="Carucci D.J."/>
            <person name="Hoffman S.L."/>
            <person name="Newbold C."/>
            <person name="Davis R.W."/>
            <person name="Fraser C.M."/>
            <person name="Barrell B.G."/>
        </authorList>
    </citation>
    <scope>NUCLEOTIDE SEQUENCE [LARGE SCALE GENOMIC DNA]</scope>
    <source>
        <strain>3D7</strain>
    </source>
</reference>
<reference key="2">
    <citation type="journal article" date="2002" name="Nature">
        <title>Sequence of Plasmodium falciparum chromosomes 1, 3-9 and 13.</title>
        <authorList>
            <person name="Hall N."/>
            <person name="Pain A."/>
            <person name="Berriman M."/>
            <person name="Churcher C.M."/>
            <person name="Harris B."/>
            <person name="Harris D."/>
            <person name="Mungall K.L."/>
            <person name="Bowman S."/>
            <person name="Atkin R."/>
            <person name="Baker S."/>
            <person name="Barron A."/>
            <person name="Brooks K."/>
            <person name="Buckee C.O."/>
            <person name="Burrows C."/>
            <person name="Cherevach I."/>
            <person name="Chillingworth C."/>
            <person name="Chillingworth T."/>
            <person name="Christodoulou Z."/>
            <person name="Clark L."/>
            <person name="Clark R."/>
            <person name="Corton C."/>
            <person name="Cronin A."/>
            <person name="Davies R.M."/>
            <person name="Davis P."/>
            <person name="Dear P."/>
            <person name="Dearden F."/>
            <person name="Doggett J."/>
            <person name="Feltwell T."/>
            <person name="Goble A."/>
            <person name="Goodhead I."/>
            <person name="Gwilliam R."/>
            <person name="Hamlin N."/>
            <person name="Hance Z."/>
            <person name="Harper D."/>
            <person name="Hauser H."/>
            <person name="Hornsby T."/>
            <person name="Holroyd S."/>
            <person name="Horrocks P."/>
            <person name="Humphray S."/>
            <person name="Jagels K."/>
            <person name="James K.D."/>
            <person name="Johnson D."/>
            <person name="Kerhornou A."/>
            <person name="Knights A."/>
            <person name="Konfortov B."/>
            <person name="Kyes S."/>
            <person name="Larke N."/>
            <person name="Lawson D."/>
            <person name="Lennard N."/>
            <person name="Line A."/>
            <person name="Maddison M."/>
            <person name="Mclean J."/>
            <person name="Mooney P."/>
            <person name="Moule S."/>
            <person name="Murphy L."/>
            <person name="Oliver K."/>
            <person name="Ormond D."/>
            <person name="Price C."/>
            <person name="Quail M.A."/>
            <person name="Rabbinowitsch E."/>
            <person name="Rajandream M.A."/>
            <person name="Rutter S."/>
            <person name="Rutherford K.M."/>
            <person name="Sanders M."/>
            <person name="Simmonds M."/>
            <person name="Seeger K."/>
            <person name="Sharp S."/>
            <person name="Smith R."/>
            <person name="Squares R."/>
            <person name="Squares S."/>
            <person name="Stevens K."/>
            <person name="Taylor K."/>
            <person name="Tivey A."/>
            <person name="Unwin L."/>
            <person name="Whitehead S."/>
            <person name="Woodward J.R."/>
            <person name="Sulston J.E."/>
            <person name="Craig A."/>
            <person name="Newbold C."/>
            <person name="Barrell B.G."/>
        </authorList>
    </citation>
    <scope>NUCLEOTIDE SEQUENCE [LARGE SCALE GENOMIC DNA]</scope>
    <source>
        <strain>3D7</strain>
    </source>
</reference>
<reference evidence="7" key="3">
    <citation type="journal article" date="2007" name="PLoS ONE">
        <title>Rapid identification of malaria vaccine candidates based on alpha-helical coiled coil protein motif.</title>
        <authorList>
            <person name="Villard V."/>
            <person name="Agak G.W."/>
            <person name="Frank G."/>
            <person name="Jafarshad A."/>
            <person name="Servis C."/>
            <person name="Nebie I."/>
            <person name="Sirima S.B."/>
            <person name="Felger I."/>
            <person name="Arevalo-Herrera M."/>
            <person name="Herrera S."/>
            <person name="Heitz F."/>
            <person name="Baecker V."/>
            <person name="Druilhe P."/>
            <person name="Kajava A.V."/>
            <person name="Corradin G."/>
        </authorList>
    </citation>
    <scope>SYNTHESIS OF 16-45</scope>
    <scope>POSSIBLE CANDIDATE MALARIA EPITOPE</scope>
</reference>
<reference evidence="7" key="4">
    <citation type="journal article" date="2004" name="Mol. Biochem. Parasitol.">
        <title>Characterization of PfMyb1 transcription factor during erythrocytic development of 3D7 and F12 Plasmodium falciparum clones.</title>
        <authorList>
            <person name="Boschet C."/>
            <person name="Gissot M."/>
            <person name="Briquet S."/>
            <person name="Hamid Z."/>
            <person name="Claudel-Renard C."/>
            <person name="Vaquero C."/>
        </authorList>
    </citation>
    <scope>FUNCTION</scope>
    <scope>SUBCELLULAR LOCATION</scope>
    <scope>DEVELOPMENTAL STAGE</scope>
</reference>
<reference evidence="7" key="5">
    <citation type="journal article" date="2005" name="J. Mol. Biol.">
        <title>PfMyb1, a Plasmodium falciparum transcription factor, is required for intra-erythrocytic growth and controls key genes for cell cycle regulation.</title>
        <authorList>
            <person name="Gissot M."/>
            <person name="Briquet S."/>
            <person name="Refour P."/>
            <person name="Boschet C."/>
            <person name="Vaquero C."/>
        </authorList>
    </citation>
    <scope>FUNCTION</scope>
    <scope>SUBCELLULAR LOCATION</scope>
    <scope>DISRUPTION PHENOTYPE</scope>
</reference>
<proteinExistence type="evidence at protein level"/>
<evidence type="ECO:0000255" key="1">
    <source>
        <dbReference type="PROSITE-ProRule" id="PRU00133"/>
    </source>
</evidence>
<evidence type="ECO:0000269" key="2">
    <source>
    </source>
</evidence>
<evidence type="ECO:0000269" key="3">
    <source>
    </source>
</evidence>
<evidence type="ECO:0000269" key="4">
    <source>
    </source>
</evidence>
<evidence type="ECO:0000303" key="5">
    <source>
    </source>
</evidence>
<evidence type="ECO:0000303" key="6">
    <source>
    </source>
</evidence>
<evidence type="ECO:0000305" key="7"/>
<evidence type="ECO:0000312" key="8">
    <source>
        <dbReference type="EMBL" id="CAD52303.2"/>
    </source>
</evidence>
<accession>Q8IEF6</accession>
<feature type="chain" id="PRO_0000388755" description="Myb1 protein">
    <location>
        <begin position="1"/>
        <end position="414"/>
    </location>
</feature>
<feature type="domain" description="Myb-like 1" evidence="1">
    <location>
        <begin position="242"/>
        <end position="266"/>
    </location>
</feature>
<feature type="domain" description="Myb-like 2" evidence="1">
    <location>
        <begin position="268"/>
        <end position="320"/>
    </location>
</feature>
<feature type="domain" description="Myb-like 3" evidence="1">
    <location>
        <begin position="328"/>
        <end position="381"/>
    </location>
</feature>
<keyword id="KW-0010">Activator</keyword>
<keyword id="KW-0238">DNA-binding</keyword>
<keyword id="KW-0477">Merozoite</keyword>
<keyword id="KW-0539">Nucleus</keyword>
<keyword id="KW-1185">Reference proteome</keyword>
<keyword id="KW-0677">Repeat</keyword>
<keyword id="KW-0804">Transcription</keyword>
<keyword id="KW-0805">Transcription regulation</keyword>
<protein>
    <recommendedName>
        <fullName evidence="8">Myb1 protein</fullName>
        <shortName evidence="5 6">PfMyb1</shortName>
    </recommendedName>
</protein>
<sequence length="414" mass="49993">MFNNNNEYECLCILEEKLVKHLDVIDKLIENIYDNINNLNEYINKKYNEIKILASKKPTRINWMKCDDKTHMSLFFDKKIGFIPSNEDALKILDSQLMLSNYRKKYEYKKNSWTKKDIDKLFETVDITLKKYACYYLIDQNLSCDEKINKKKMIEQSEPKQIFSQIKLFFDKYNKENTHNKGNEDNVNKNINDNISKNNITHTQNCYEPIEKEQDNSNNIFSYTKNDKNIEHNFLYFSETFWNEVSEKLSNNQNAKECQKMWLYYGCFEDDKQKKWTKDEVDKLLCLSKKYEQRNWKCIARELNTNRSPLSCFEQYIKINKLYENKEKVKLERIAFNVLEDIQLQILVSIIGDKNWAEVKKHMESLNSNTSRIKKRKTNLNFFEKEKQKKFLNDEISYKRRYLRLISATNNMEQ</sequence>
<comment type="function">
    <text evidence="2 3">Transcriptional activator. Has a role in the parasite erythrocytic cycle where it directly regulates key genes involved in cell cycle regulation and progression. Binds directly to Myb regulatory elements.</text>
</comment>
<comment type="subcellular location">
    <subcellularLocation>
        <location evidence="2 3">Nucleus</location>
    </subcellularLocation>
</comment>
<comment type="developmental stage">
    <text evidence="2">Expressed throughout the erythrocytic development of the infected host, low expression in rings and schizonts, high levels in trophozoites.</text>
</comment>
<comment type="disruption phenotype">
    <text evidence="3">dsRNA causes reduced expression, alters parasite growth and trophozoite to schizont transition during the erythrocytic cycle.</text>
</comment>
<comment type="biotechnology">
    <text evidence="4">Possible candidate for an effective malaria vaccine as determined by epitope response in sera.</text>
</comment>
<gene>
    <name evidence="8" type="primary">myb1</name>
    <name type="ORF">PF13_0088</name>
</gene>
<dbReference type="EMBL" id="AL844509">
    <property type="protein sequence ID" value="CAD52303.2"/>
    <property type="molecule type" value="Genomic_DNA"/>
</dbReference>
<dbReference type="RefSeq" id="XP_001349895.2">
    <property type="nucleotide sequence ID" value="XM_001349859.2"/>
</dbReference>
<dbReference type="SMR" id="Q8IEF6"/>
<dbReference type="FunCoup" id="Q8IEF6">
    <property type="interactions" value="1"/>
</dbReference>
<dbReference type="STRING" id="36329.Q8IEF6"/>
<dbReference type="PaxDb" id="5833-PF13_0088"/>
<dbReference type="EnsemblProtists" id="CAD52303">
    <property type="protein sequence ID" value="CAD52303"/>
    <property type="gene ID" value="PF3D7_1315800"/>
</dbReference>
<dbReference type="KEGG" id="pfa:PF3D7_1315800"/>
<dbReference type="VEuPathDB" id="PlasmoDB:PF3D7_1315800"/>
<dbReference type="HOGENOM" id="CLU_708796_0_0_1"/>
<dbReference type="InParanoid" id="Q8IEF6"/>
<dbReference type="OMA" id="ECQKTWL"/>
<dbReference type="OrthoDB" id="2143914at2759"/>
<dbReference type="PhylomeDB" id="Q8IEF6"/>
<dbReference type="Proteomes" id="UP000001450">
    <property type="component" value="Chromosome 13"/>
</dbReference>
<dbReference type="GO" id="GO:0005634">
    <property type="term" value="C:nucleus"/>
    <property type="evidence" value="ECO:0000314"/>
    <property type="project" value="UniProtKB"/>
</dbReference>
<dbReference type="GO" id="GO:0003677">
    <property type="term" value="F:DNA binding"/>
    <property type="evidence" value="ECO:0007669"/>
    <property type="project" value="UniProtKB-KW"/>
</dbReference>
<dbReference type="GO" id="GO:0003700">
    <property type="term" value="F:DNA-binding transcription factor activity"/>
    <property type="evidence" value="ECO:0000314"/>
    <property type="project" value="GeneDB"/>
</dbReference>
<dbReference type="GO" id="GO:0045893">
    <property type="term" value="P:positive regulation of DNA-templated transcription"/>
    <property type="evidence" value="ECO:0000315"/>
    <property type="project" value="UniProtKB"/>
</dbReference>
<dbReference type="GO" id="GO:0006355">
    <property type="term" value="P:regulation of DNA-templated transcription"/>
    <property type="evidence" value="ECO:0000314"/>
    <property type="project" value="GeneDB"/>
</dbReference>
<dbReference type="GO" id="GO:0007346">
    <property type="term" value="P:regulation of mitotic cell cycle"/>
    <property type="evidence" value="ECO:0000315"/>
    <property type="project" value="UniProtKB"/>
</dbReference>
<dbReference type="CDD" id="cd00167">
    <property type="entry name" value="SANT"/>
    <property type="match status" value="1"/>
</dbReference>
<dbReference type="Gene3D" id="1.10.10.60">
    <property type="entry name" value="Homeodomain-like"/>
    <property type="match status" value="1"/>
</dbReference>
<dbReference type="InterPro" id="IPR009057">
    <property type="entry name" value="Homeodomain-like_sf"/>
</dbReference>
<dbReference type="InterPro" id="IPR051575">
    <property type="entry name" value="Myb-like_DNA-bd"/>
</dbReference>
<dbReference type="InterPro" id="IPR001005">
    <property type="entry name" value="SANT/Myb"/>
</dbReference>
<dbReference type="PANTHER" id="PTHR46621">
    <property type="entry name" value="SNRNA-ACTIVATING PROTEIN COMPLEX SUBUNIT 4"/>
    <property type="match status" value="1"/>
</dbReference>
<dbReference type="PANTHER" id="PTHR46621:SF1">
    <property type="entry name" value="SNRNA-ACTIVATING PROTEIN COMPLEX SUBUNIT 4"/>
    <property type="match status" value="1"/>
</dbReference>
<dbReference type="Pfam" id="PF13921">
    <property type="entry name" value="Myb_DNA-bind_6"/>
    <property type="match status" value="1"/>
</dbReference>
<dbReference type="SMART" id="SM00717">
    <property type="entry name" value="SANT"/>
    <property type="match status" value="2"/>
</dbReference>
<dbReference type="SUPFAM" id="SSF46689">
    <property type="entry name" value="Homeodomain-like"/>
    <property type="match status" value="1"/>
</dbReference>
<dbReference type="PROSITE" id="PS50090">
    <property type="entry name" value="MYB_LIKE"/>
    <property type="match status" value="3"/>
</dbReference>